<organism>
    <name type="scientific">Caulobacter vibrioides (strain ATCC 19089 / CIP 103742 / CB 15)</name>
    <name type="common">Caulobacter crescentus</name>
    <dbReference type="NCBI Taxonomy" id="190650"/>
    <lineage>
        <taxon>Bacteria</taxon>
        <taxon>Pseudomonadati</taxon>
        <taxon>Pseudomonadota</taxon>
        <taxon>Alphaproteobacteria</taxon>
        <taxon>Caulobacterales</taxon>
        <taxon>Caulobacteraceae</taxon>
        <taxon>Caulobacter</taxon>
    </lineage>
</organism>
<reference key="1">
    <citation type="journal article" date="2001" name="Proc. Natl. Acad. Sci. U.S.A.">
        <title>Complete genome sequence of Caulobacter crescentus.</title>
        <authorList>
            <person name="Nierman W.C."/>
            <person name="Feldblyum T.V."/>
            <person name="Laub M.T."/>
            <person name="Paulsen I.T."/>
            <person name="Nelson K.E."/>
            <person name="Eisen J.A."/>
            <person name="Heidelberg J.F."/>
            <person name="Alley M.R.K."/>
            <person name="Ohta N."/>
            <person name="Maddock J.R."/>
            <person name="Potocka I."/>
            <person name="Nelson W.C."/>
            <person name="Newton A."/>
            <person name="Stephens C."/>
            <person name="Phadke N.D."/>
            <person name="Ely B."/>
            <person name="DeBoy R.T."/>
            <person name="Dodson R.J."/>
            <person name="Durkin A.S."/>
            <person name="Gwinn M.L."/>
            <person name="Haft D.H."/>
            <person name="Kolonay J.F."/>
            <person name="Smit J."/>
            <person name="Craven M.B."/>
            <person name="Khouri H.M."/>
            <person name="Shetty J."/>
            <person name="Berry K.J."/>
            <person name="Utterback T.R."/>
            <person name="Tran K."/>
            <person name="Wolf A.M."/>
            <person name="Vamathevan J.J."/>
            <person name="Ermolaeva M.D."/>
            <person name="White O."/>
            <person name="Salzberg S.L."/>
            <person name="Venter J.C."/>
            <person name="Shapiro L."/>
            <person name="Fraser C.M."/>
        </authorList>
    </citation>
    <scope>NUCLEOTIDE SEQUENCE [LARGE SCALE GENOMIC DNA]</scope>
    <source>
        <strain>ATCC 19089 / CIP 103742 / CB 15</strain>
    </source>
</reference>
<gene>
    <name evidence="1" type="primary">bioD</name>
    <name type="ordered locus">CC_1575</name>
</gene>
<protein>
    <recommendedName>
        <fullName evidence="1">ATP-dependent dethiobiotin synthetase BioD</fullName>
        <ecNumber evidence="1">6.3.3.3</ecNumber>
    </recommendedName>
    <alternativeName>
        <fullName evidence="1">DTB synthetase</fullName>
        <shortName evidence="1">DTBS</shortName>
    </alternativeName>
    <alternativeName>
        <fullName evidence="1">Dethiobiotin synthase</fullName>
    </alternativeName>
</protein>
<name>BIOD_CAUVC</name>
<feature type="chain" id="PRO_0000187955" description="ATP-dependent dethiobiotin synthetase BioD">
    <location>
        <begin position="1"/>
        <end position="219"/>
    </location>
</feature>
<feature type="active site" evidence="1">
    <location>
        <position position="37"/>
    </location>
</feature>
<feature type="binding site" evidence="1">
    <location>
        <begin position="12"/>
        <end position="17"/>
    </location>
    <ligand>
        <name>ATP</name>
        <dbReference type="ChEBI" id="CHEBI:30616"/>
    </ligand>
</feature>
<feature type="binding site" evidence="1">
    <location>
        <position position="16"/>
    </location>
    <ligand>
        <name>Mg(2+)</name>
        <dbReference type="ChEBI" id="CHEBI:18420"/>
    </ligand>
</feature>
<feature type="binding site" evidence="1">
    <location>
        <position position="41"/>
    </location>
    <ligand>
        <name>substrate</name>
    </ligand>
</feature>
<feature type="binding site" evidence="1">
    <location>
        <position position="52"/>
    </location>
    <ligand>
        <name>ATP</name>
        <dbReference type="ChEBI" id="CHEBI:30616"/>
    </ligand>
</feature>
<feature type="binding site" evidence="1">
    <location>
        <position position="52"/>
    </location>
    <ligand>
        <name>Mg(2+)</name>
        <dbReference type="ChEBI" id="CHEBI:18420"/>
    </ligand>
</feature>
<feature type="binding site" evidence="1">
    <location>
        <begin position="115"/>
        <end position="118"/>
    </location>
    <ligand>
        <name>ATP</name>
        <dbReference type="ChEBI" id="CHEBI:30616"/>
    </ligand>
</feature>
<feature type="binding site" evidence="1">
    <location>
        <position position="115"/>
    </location>
    <ligand>
        <name>Mg(2+)</name>
        <dbReference type="ChEBI" id="CHEBI:18420"/>
    </ligand>
</feature>
<feature type="binding site" evidence="1">
    <location>
        <begin position="175"/>
        <end position="176"/>
    </location>
    <ligand>
        <name>ATP</name>
        <dbReference type="ChEBI" id="CHEBI:30616"/>
    </ligand>
</feature>
<dbReference type="EC" id="6.3.3.3" evidence="1"/>
<dbReference type="EMBL" id="AE005673">
    <property type="protein sequence ID" value="AAK23554.1"/>
    <property type="molecule type" value="Genomic_DNA"/>
</dbReference>
<dbReference type="PIR" id="F87444">
    <property type="entry name" value="F87444"/>
</dbReference>
<dbReference type="RefSeq" id="NP_420386.1">
    <property type="nucleotide sequence ID" value="NC_002696.2"/>
</dbReference>
<dbReference type="RefSeq" id="WP_010919449.1">
    <property type="nucleotide sequence ID" value="NC_002696.2"/>
</dbReference>
<dbReference type="SMR" id="Q9A7Z2"/>
<dbReference type="STRING" id="190650.CC_1575"/>
<dbReference type="EnsemblBacteria" id="AAK23554">
    <property type="protein sequence ID" value="AAK23554"/>
    <property type="gene ID" value="CC_1575"/>
</dbReference>
<dbReference type="KEGG" id="ccr:CC_1575"/>
<dbReference type="PATRIC" id="fig|190650.5.peg.1603"/>
<dbReference type="eggNOG" id="COG0132">
    <property type="taxonomic scope" value="Bacteria"/>
</dbReference>
<dbReference type="HOGENOM" id="CLU_072551_3_1_5"/>
<dbReference type="BioCyc" id="CAULO:CC1575-MONOMER"/>
<dbReference type="UniPathway" id="UPA00078">
    <property type="reaction ID" value="UER00161"/>
</dbReference>
<dbReference type="Proteomes" id="UP000001816">
    <property type="component" value="Chromosome"/>
</dbReference>
<dbReference type="GO" id="GO:0005829">
    <property type="term" value="C:cytosol"/>
    <property type="evidence" value="ECO:0007669"/>
    <property type="project" value="TreeGrafter"/>
</dbReference>
<dbReference type="GO" id="GO:0005524">
    <property type="term" value="F:ATP binding"/>
    <property type="evidence" value="ECO:0007669"/>
    <property type="project" value="UniProtKB-UniRule"/>
</dbReference>
<dbReference type="GO" id="GO:0004141">
    <property type="term" value="F:dethiobiotin synthase activity"/>
    <property type="evidence" value="ECO:0007669"/>
    <property type="project" value="UniProtKB-UniRule"/>
</dbReference>
<dbReference type="GO" id="GO:0000287">
    <property type="term" value="F:magnesium ion binding"/>
    <property type="evidence" value="ECO:0007669"/>
    <property type="project" value="UniProtKB-UniRule"/>
</dbReference>
<dbReference type="GO" id="GO:0009102">
    <property type="term" value="P:biotin biosynthetic process"/>
    <property type="evidence" value="ECO:0007669"/>
    <property type="project" value="UniProtKB-UniRule"/>
</dbReference>
<dbReference type="CDD" id="cd03109">
    <property type="entry name" value="DTBS"/>
    <property type="match status" value="1"/>
</dbReference>
<dbReference type="Gene3D" id="3.40.50.300">
    <property type="entry name" value="P-loop containing nucleotide triphosphate hydrolases"/>
    <property type="match status" value="1"/>
</dbReference>
<dbReference type="HAMAP" id="MF_00336">
    <property type="entry name" value="BioD"/>
    <property type="match status" value="1"/>
</dbReference>
<dbReference type="InterPro" id="IPR004472">
    <property type="entry name" value="DTB_synth_BioD"/>
</dbReference>
<dbReference type="InterPro" id="IPR027417">
    <property type="entry name" value="P-loop_NTPase"/>
</dbReference>
<dbReference type="NCBIfam" id="TIGR00347">
    <property type="entry name" value="bioD"/>
    <property type="match status" value="1"/>
</dbReference>
<dbReference type="PANTHER" id="PTHR43210">
    <property type="entry name" value="DETHIOBIOTIN SYNTHETASE"/>
    <property type="match status" value="1"/>
</dbReference>
<dbReference type="PANTHER" id="PTHR43210:SF5">
    <property type="entry name" value="DETHIOBIOTIN SYNTHETASE"/>
    <property type="match status" value="1"/>
</dbReference>
<dbReference type="Pfam" id="PF13500">
    <property type="entry name" value="AAA_26"/>
    <property type="match status" value="1"/>
</dbReference>
<dbReference type="PIRSF" id="PIRSF006755">
    <property type="entry name" value="DTB_synth"/>
    <property type="match status" value="1"/>
</dbReference>
<dbReference type="SUPFAM" id="SSF52540">
    <property type="entry name" value="P-loop containing nucleoside triphosphate hydrolases"/>
    <property type="match status" value="1"/>
</dbReference>
<proteinExistence type="inferred from homology"/>
<evidence type="ECO:0000255" key="1">
    <source>
        <dbReference type="HAMAP-Rule" id="MF_00336"/>
    </source>
</evidence>
<keyword id="KW-0067">ATP-binding</keyword>
<keyword id="KW-0093">Biotin biosynthesis</keyword>
<keyword id="KW-0963">Cytoplasm</keyword>
<keyword id="KW-0436">Ligase</keyword>
<keyword id="KW-0460">Magnesium</keyword>
<keyword id="KW-0479">Metal-binding</keyword>
<keyword id="KW-0547">Nucleotide-binding</keyword>
<keyword id="KW-1185">Reference proteome</keyword>
<sequence length="219" mass="22895">MKSLFVAGTGTDLGKTHVACALLEAARAGGLSVDAFKPVVSGFDPDAPDDSDPARLARALGRPEAWTDVSPRRYRAPLAPNIAARLEGDTLQMDDLITDCREWLIGRDVGLALIEGAGGVMSPMTDEATNLDLMVALGLPVLLVAGSYLGTASHLLTALEVLRARGLSIAAIVVSESLDAPDLDQTLGLLRAFEHQATILSAPRAGNWDAGSLVDLLMA</sequence>
<comment type="function">
    <text evidence="1">Catalyzes a mechanistically unusual reaction, the ATP-dependent insertion of CO2 between the N7 and N8 nitrogen atoms of 7,8-diaminopelargonic acid (DAPA, also called 7,8-diammoniononanoate) to form a ureido ring.</text>
</comment>
<comment type="catalytic activity">
    <reaction evidence="1">
        <text>(7R,8S)-7,8-diammoniononanoate + CO2 + ATP = (4R,5S)-dethiobiotin + ADP + phosphate + 3 H(+)</text>
        <dbReference type="Rhea" id="RHEA:15805"/>
        <dbReference type="ChEBI" id="CHEBI:15378"/>
        <dbReference type="ChEBI" id="CHEBI:16526"/>
        <dbReference type="ChEBI" id="CHEBI:30616"/>
        <dbReference type="ChEBI" id="CHEBI:43474"/>
        <dbReference type="ChEBI" id="CHEBI:149469"/>
        <dbReference type="ChEBI" id="CHEBI:149473"/>
        <dbReference type="ChEBI" id="CHEBI:456216"/>
        <dbReference type="EC" id="6.3.3.3"/>
    </reaction>
</comment>
<comment type="cofactor">
    <cofactor evidence="1">
        <name>Mg(2+)</name>
        <dbReference type="ChEBI" id="CHEBI:18420"/>
    </cofactor>
</comment>
<comment type="pathway">
    <text evidence="1">Cofactor biosynthesis; biotin biosynthesis; biotin from 7,8-diaminononanoate: step 1/2.</text>
</comment>
<comment type="subunit">
    <text evidence="1">Homodimer.</text>
</comment>
<comment type="subcellular location">
    <subcellularLocation>
        <location evidence="1">Cytoplasm</location>
    </subcellularLocation>
</comment>
<comment type="similarity">
    <text evidence="1">Belongs to the dethiobiotin synthetase family.</text>
</comment>
<accession>Q9A7Z2</accession>